<evidence type="ECO:0000255" key="1">
    <source>
        <dbReference type="HAMAP-Rule" id="MF_00195"/>
    </source>
</evidence>
<dbReference type="EMBL" id="CP001339">
    <property type="protein sequence ID" value="ACL73125.1"/>
    <property type="molecule type" value="Genomic_DNA"/>
</dbReference>
<dbReference type="RefSeq" id="WP_012638604.1">
    <property type="nucleotide sequence ID" value="NC_011901.1"/>
</dbReference>
<dbReference type="SMR" id="B8GTN1"/>
<dbReference type="STRING" id="396588.Tgr7_2045"/>
<dbReference type="KEGG" id="tgr:Tgr7_2045"/>
<dbReference type="eggNOG" id="COG1160">
    <property type="taxonomic scope" value="Bacteria"/>
</dbReference>
<dbReference type="HOGENOM" id="CLU_016077_6_2_6"/>
<dbReference type="OrthoDB" id="9805918at2"/>
<dbReference type="Proteomes" id="UP000002383">
    <property type="component" value="Chromosome"/>
</dbReference>
<dbReference type="GO" id="GO:0016887">
    <property type="term" value="F:ATP hydrolysis activity"/>
    <property type="evidence" value="ECO:0007669"/>
    <property type="project" value="InterPro"/>
</dbReference>
<dbReference type="GO" id="GO:0005525">
    <property type="term" value="F:GTP binding"/>
    <property type="evidence" value="ECO:0007669"/>
    <property type="project" value="UniProtKB-UniRule"/>
</dbReference>
<dbReference type="GO" id="GO:0043022">
    <property type="term" value="F:ribosome binding"/>
    <property type="evidence" value="ECO:0007669"/>
    <property type="project" value="TreeGrafter"/>
</dbReference>
<dbReference type="GO" id="GO:0042254">
    <property type="term" value="P:ribosome biogenesis"/>
    <property type="evidence" value="ECO:0007669"/>
    <property type="project" value="UniProtKB-KW"/>
</dbReference>
<dbReference type="CDD" id="cd01894">
    <property type="entry name" value="EngA1"/>
    <property type="match status" value="1"/>
</dbReference>
<dbReference type="CDD" id="cd01895">
    <property type="entry name" value="EngA2"/>
    <property type="match status" value="1"/>
</dbReference>
<dbReference type="FunFam" id="3.30.300.20:FF:000004">
    <property type="entry name" value="GTPase Der"/>
    <property type="match status" value="1"/>
</dbReference>
<dbReference type="FunFam" id="3.40.50.300:FF:000040">
    <property type="entry name" value="GTPase Der"/>
    <property type="match status" value="1"/>
</dbReference>
<dbReference type="FunFam" id="3.40.50.300:FF:000057">
    <property type="entry name" value="GTPase Der"/>
    <property type="match status" value="1"/>
</dbReference>
<dbReference type="Gene3D" id="3.30.300.20">
    <property type="match status" value="1"/>
</dbReference>
<dbReference type="Gene3D" id="3.40.50.300">
    <property type="entry name" value="P-loop containing nucleotide triphosphate hydrolases"/>
    <property type="match status" value="2"/>
</dbReference>
<dbReference type="HAMAP" id="MF_00195">
    <property type="entry name" value="GTPase_Der"/>
    <property type="match status" value="1"/>
</dbReference>
<dbReference type="InterPro" id="IPR003593">
    <property type="entry name" value="AAA+_ATPase"/>
</dbReference>
<dbReference type="InterPro" id="IPR031166">
    <property type="entry name" value="G_ENGA"/>
</dbReference>
<dbReference type="InterPro" id="IPR006073">
    <property type="entry name" value="GTP-bd"/>
</dbReference>
<dbReference type="InterPro" id="IPR016484">
    <property type="entry name" value="GTPase_Der"/>
</dbReference>
<dbReference type="InterPro" id="IPR032859">
    <property type="entry name" value="KH_dom-like"/>
</dbReference>
<dbReference type="InterPro" id="IPR015946">
    <property type="entry name" value="KH_dom-like_a/b"/>
</dbReference>
<dbReference type="InterPro" id="IPR027417">
    <property type="entry name" value="P-loop_NTPase"/>
</dbReference>
<dbReference type="InterPro" id="IPR005225">
    <property type="entry name" value="Small_GTP-bd"/>
</dbReference>
<dbReference type="NCBIfam" id="TIGR03594">
    <property type="entry name" value="GTPase_EngA"/>
    <property type="match status" value="1"/>
</dbReference>
<dbReference type="NCBIfam" id="TIGR00231">
    <property type="entry name" value="small_GTP"/>
    <property type="match status" value="2"/>
</dbReference>
<dbReference type="PANTHER" id="PTHR43834">
    <property type="entry name" value="GTPASE DER"/>
    <property type="match status" value="1"/>
</dbReference>
<dbReference type="PANTHER" id="PTHR43834:SF6">
    <property type="entry name" value="GTPASE DER"/>
    <property type="match status" value="1"/>
</dbReference>
<dbReference type="Pfam" id="PF14714">
    <property type="entry name" value="KH_dom-like"/>
    <property type="match status" value="1"/>
</dbReference>
<dbReference type="Pfam" id="PF01926">
    <property type="entry name" value="MMR_HSR1"/>
    <property type="match status" value="2"/>
</dbReference>
<dbReference type="PIRSF" id="PIRSF006485">
    <property type="entry name" value="GTP-binding_EngA"/>
    <property type="match status" value="1"/>
</dbReference>
<dbReference type="PRINTS" id="PR00326">
    <property type="entry name" value="GTP1OBG"/>
</dbReference>
<dbReference type="SMART" id="SM00382">
    <property type="entry name" value="AAA"/>
    <property type="match status" value="2"/>
</dbReference>
<dbReference type="SUPFAM" id="SSF52540">
    <property type="entry name" value="P-loop containing nucleoside triphosphate hydrolases"/>
    <property type="match status" value="2"/>
</dbReference>
<dbReference type="PROSITE" id="PS51712">
    <property type="entry name" value="G_ENGA"/>
    <property type="match status" value="2"/>
</dbReference>
<proteinExistence type="inferred from homology"/>
<protein>
    <recommendedName>
        <fullName evidence="1">GTPase Der</fullName>
    </recommendedName>
    <alternativeName>
        <fullName evidence="1">GTP-binding protein EngA</fullName>
    </alternativeName>
</protein>
<reference key="1">
    <citation type="journal article" date="2011" name="Stand. Genomic Sci.">
        <title>Complete genome sequence of 'Thioalkalivibrio sulfidophilus' HL-EbGr7.</title>
        <authorList>
            <person name="Muyzer G."/>
            <person name="Sorokin D.Y."/>
            <person name="Mavromatis K."/>
            <person name="Lapidus A."/>
            <person name="Clum A."/>
            <person name="Ivanova N."/>
            <person name="Pati A."/>
            <person name="d'Haeseleer P."/>
            <person name="Woyke T."/>
            <person name="Kyrpides N.C."/>
        </authorList>
    </citation>
    <scope>NUCLEOTIDE SEQUENCE [LARGE SCALE GENOMIC DNA]</scope>
    <source>
        <strain>HL-EbGR7</strain>
    </source>
</reference>
<sequence length="464" mass="51307">MLPVIALVGRPNVGKSTLFNQLTRSRDALVADFPGLTRDRQYGPGRVGGFPYMVVDTGGLSGEAETLDNLMARQTQQAIDESDVVLFLVDGREGLTAADQAIARSLRTQGKKVLLVVNKTDGVDADQAMAEFHALGFGAPIPIAATHGRGVLGLMNAVHALLPEVEEIQAEAERWPGIRIAFVGRPNAGKSTLINRILGEERVVATEIPGTTRDSIFIPFERDGQQYTLIDTAGVRRRSRVHEAIEKFSVVKTLQAIDAAHVVVMVLDAREGISEQDAHLLGVVLDAGRALVVAINKWDGLDPDQRDRIRHELDLKLPFLDFAEKRFISALHGTGVGDLFAHVKRAYDSAFIKVSTNHLTKLLESAMVAHQPPLVSGRRVKLRYAHQGGQNPPIIVIHGNMTERLPGSYKRYLSNHFRQHLKLVGTPIRLEFKTGENPYAGKRNVLTPRQQYKRKRMMRHAKKK</sequence>
<feature type="chain" id="PRO_1000124380" description="GTPase Der">
    <location>
        <begin position="1"/>
        <end position="464"/>
    </location>
</feature>
<feature type="domain" description="EngA-type G 1">
    <location>
        <begin position="3"/>
        <end position="166"/>
    </location>
</feature>
<feature type="domain" description="EngA-type G 2">
    <location>
        <begin position="178"/>
        <end position="351"/>
    </location>
</feature>
<feature type="domain" description="KH-like" evidence="1">
    <location>
        <begin position="352"/>
        <end position="436"/>
    </location>
</feature>
<feature type="binding site" evidence="1">
    <location>
        <begin position="9"/>
        <end position="16"/>
    </location>
    <ligand>
        <name>GTP</name>
        <dbReference type="ChEBI" id="CHEBI:37565"/>
        <label>1</label>
    </ligand>
</feature>
<feature type="binding site" evidence="1">
    <location>
        <begin position="56"/>
        <end position="60"/>
    </location>
    <ligand>
        <name>GTP</name>
        <dbReference type="ChEBI" id="CHEBI:37565"/>
        <label>1</label>
    </ligand>
</feature>
<feature type="binding site" evidence="1">
    <location>
        <begin position="118"/>
        <end position="121"/>
    </location>
    <ligand>
        <name>GTP</name>
        <dbReference type="ChEBI" id="CHEBI:37565"/>
        <label>1</label>
    </ligand>
</feature>
<feature type="binding site" evidence="1">
    <location>
        <begin position="184"/>
        <end position="191"/>
    </location>
    <ligand>
        <name>GTP</name>
        <dbReference type="ChEBI" id="CHEBI:37565"/>
        <label>2</label>
    </ligand>
</feature>
<feature type="binding site" evidence="1">
    <location>
        <begin position="231"/>
        <end position="235"/>
    </location>
    <ligand>
        <name>GTP</name>
        <dbReference type="ChEBI" id="CHEBI:37565"/>
        <label>2</label>
    </ligand>
</feature>
<feature type="binding site" evidence="1">
    <location>
        <begin position="296"/>
        <end position="299"/>
    </location>
    <ligand>
        <name>GTP</name>
        <dbReference type="ChEBI" id="CHEBI:37565"/>
        <label>2</label>
    </ligand>
</feature>
<keyword id="KW-0342">GTP-binding</keyword>
<keyword id="KW-0547">Nucleotide-binding</keyword>
<keyword id="KW-1185">Reference proteome</keyword>
<keyword id="KW-0677">Repeat</keyword>
<keyword id="KW-0690">Ribosome biogenesis</keyword>
<organism>
    <name type="scientific">Thioalkalivibrio sulfidiphilus (strain HL-EbGR7)</name>
    <dbReference type="NCBI Taxonomy" id="396588"/>
    <lineage>
        <taxon>Bacteria</taxon>
        <taxon>Pseudomonadati</taxon>
        <taxon>Pseudomonadota</taxon>
        <taxon>Gammaproteobacteria</taxon>
        <taxon>Chromatiales</taxon>
        <taxon>Ectothiorhodospiraceae</taxon>
        <taxon>Thioalkalivibrio</taxon>
    </lineage>
</organism>
<accession>B8GTN1</accession>
<comment type="function">
    <text evidence="1">GTPase that plays an essential role in the late steps of ribosome biogenesis.</text>
</comment>
<comment type="subunit">
    <text evidence="1">Associates with the 50S ribosomal subunit.</text>
</comment>
<comment type="similarity">
    <text evidence="1">Belongs to the TRAFAC class TrmE-Era-EngA-EngB-Septin-like GTPase superfamily. EngA (Der) GTPase family.</text>
</comment>
<name>DER_THISH</name>
<gene>
    <name evidence="1" type="primary">der</name>
    <name type="synonym">engA</name>
    <name type="ordered locus">Tgr7_2045</name>
</gene>